<protein>
    <recommendedName>
        <fullName evidence="1">Putative HTH-type transcriptional regulatory protein Mpal_0031</fullName>
    </recommendedName>
</protein>
<feature type="chain" id="PRO_1000146937" description="Putative HTH-type transcriptional regulatory protein Mpal_0031">
    <location>
        <begin position="1"/>
        <end position="303"/>
    </location>
</feature>
<feature type="domain" description="HTH cro/C1-type" evidence="1">
    <location>
        <begin position="132"/>
        <end position="189"/>
    </location>
</feature>
<feature type="DNA-binding region" description="H-T-H motif" evidence="1">
    <location>
        <begin position="143"/>
        <end position="162"/>
    </location>
</feature>
<keyword id="KW-0238">DNA-binding</keyword>
<keyword id="KW-1185">Reference proteome</keyword>
<keyword id="KW-0804">Transcription</keyword>
<keyword id="KW-0805">Transcription regulation</keyword>
<reference key="1">
    <citation type="journal article" date="2015" name="Genome Announc.">
        <title>Complete Genome Sequence of Methanosphaerula palustris E1-9CT, a Hydrogenotrophic Methanogen Isolated from a Minerotrophic Fen Peatland.</title>
        <authorList>
            <person name="Cadillo-Quiroz H."/>
            <person name="Browne P."/>
            <person name="Kyrpides N."/>
            <person name="Woyke T."/>
            <person name="Goodwin L."/>
            <person name="Detter C."/>
            <person name="Yavitt J.B."/>
            <person name="Zinder S.H."/>
        </authorList>
    </citation>
    <scope>NUCLEOTIDE SEQUENCE [LARGE SCALE GENOMIC DNA]</scope>
    <source>
        <strain>ATCC BAA-1556 / DSM 19958 / E1-9c</strain>
    </source>
</reference>
<gene>
    <name type="ordered locus">Mpal_0031</name>
</gene>
<organism>
    <name type="scientific">Methanosphaerula palustris (strain ATCC BAA-1556 / DSM 19958 / E1-9c)</name>
    <dbReference type="NCBI Taxonomy" id="521011"/>
    <lineage>
        <taxon>Archaea</taxon>
        <taxon>Methanobacteriati</taxon>
        <taxon>Methanobacteriota</taxon>
        <taxon>Stenosarchaea group</taxon>
        <taxon>Methanomicrobia</taxon>
        <taxon>Methanomicrobiales</taxon>
        <taxon>Methanoregulaceae</taxon>
        <taxon>Methanosphaerula</taxon>
    </lineage>
</organism>
<name>Y031_METPE</name>
<proteinExistence type="inferred from homology"/>
<evidence type="ECO:0000255" key="1">
    <source>
        <dbReference type="HAMAP-Rule" id="MF_00584"/>
    </source>
</evidence>
<accession>B8GI76</accession>
<sequence length="303" mass="33135">MVQDRLFQKAISVLLIAGYEVSERCAIRPRSFDLIAEKGGLLLIIKVSSPIDNVSEEIARDLDLIAGHLEGSPLIIGGRARDTDLERGAVYLRYGIIAINPETLYDYLVDGIPPLVYASPGGLYVNINGDVLRGLREQRNMSLGDLGAVLGVSRRTISKYESGMGTTLEIAIKIEEVFDSGVIESIDLLKYTSHFANKPQERLPVQALAVLERIGLELHALRRAPFQALATFEGEMILTGYGTAQKVVKRAGLIGNLSAITHTHAMCVAIDGSIRKKVGQTLIIGEEELHDIEDGEELIELFD</sequence>
<dbReference type="EMBL" id="CP001338">
    <property type="protein sequence ID" value="ACL15427.1"/>
    <property type="molecule type" value="Genomic_DNA"/>
</dbReference>
<dbReference type="RefSeq" id="WP_012616746.1">
    <property type="nucleotide sequence ID" value="NC_011832.1"/>
</dbReference>
<dbReference type="SMR" id="B8GI76"/>
<dbReference type="STRING" id="521011.Mpal_0031"/>
<dbReference type="GeneID" id="7270143"/>
<dbReference type="KEGG" id="mpl:Mpal_0031"/>
<dbReference type="eggNOG" id="arCOG04152">
    <property type="taxonomic scope" value="Archaea"/>
</dbReference>
<dbReference type="HOGENOM" id="CLU_075726_0_0_2"/>
<dbReference type="OrthoDB" id="31424at2157"/>
<dbReference type="Proteomes" id="UP000002457">
    <property type="component" value="Chromosome"/>
</dbReference>
<dbReference type="GO" id="GO:0003677">
    <property type="term" value="F:DNA binding"/>
    <property type="evidence" value="ECO:0007669"/>
    <property type="project" value="UniProtKB-KW"/>
</dbReference>
<dbReference type="GO" id="GO:0003700">
    <property type="term" value="F:DNA-binding transcription factor activity"/>
    <property type="evidence" value="ECO:0007669"/>
    <property type="project" value="UniProtKB-UniRule"/>
</dbReference>
<dbReference type="CDD" id="cd00093">
    <property type="entry name" value="HTH_XRE"/>
    <property type="match status" value="1"/>
</dbReference>
<dbReference type="Gene3D" id="1.10.260.40">
    <property type="entry name" value="lambda repressor-like DNA-binding domains"/>
    <property type="match status" value="1"/>
</dbReference>
<dbReference type="HAMAP" id="MF_00584">
    <property type="entry name" value="HTH_type_cro_C1"/>
    <property type="match status" value="1"/>
</dbReference>
<dbReference type="InterPro" id="IPR020886">
    <property type="entry name" value="Arc_TR_HTH"/>
</dbReference>
<dbReference type="InterPro" id="IPR001387">
    <property type="entry name" value="Cro/C1-type_HTH"/>
</dbReference>
<dbReference type="InterPro" id="IPR010982">
    <property type="entry name" value="Lambda_DNA-bd_dom_sf"/>
</dbReference>
<dbReference type="NCBIfam" id="NF003162">
    <property type="entry name" value="PRK04140.1"/>
    <property type="match status" value="1"/>
</dbReference>
<dbReference type="Pfam" id="PF01381">
    <property type="entry name" value="HTH_3"/>
    <property type="match status" value="1"/>
</dbReference>
<dbReference type="SMART" id="SM00530">
    <property type="entry name" value="HTH_XRE"/>
    <property type="match status" value="1"/>
</dbReference>
<dbReference type="SUPFAM" id="SSF47413">
    <property type="entry name" value="lambda repressor-like DNA-binding domains"/>
    <property type="match status" value="1"/>
</dbReference>
<dbReference type="PROSITE" id="PS50943">
    <property type="entry name" value="HTH_CROC1"/>
    <property type="match status" value="1"/>
</dbReference>